<evidence type="ECO:0000250" key="1"/>
<evidence type="ECO:0000256" key="2">
    <source>
        <dbReference type="SAM" id="MobiDB-lite"/>
    </source>
</evidence>
<evidence type="ECO:0000305" key="3"/>
<proteinExistence type="inferred from homology"/>
<feature type="chain" id="PRO_0000333431" description="Protein sip5">
    <location>
        <begin position="1"/>
        <end position="848"/>
    </location>
</feature>
<feature type="region of interest" description="Disordered" evidence="2">
    <location>
        <begin position="1"/>
        <end position="67"/>
    </location>
</feature>
<feature type="region of interest" description="Disordered" evidence="2">
    <location>
        <begin position="154"/>
        <end position="260"/>
    </location>
</feature>
<feature type="region of interest" description="Disordered" evidence="2">
    <location>
        <begin position="312"/>
        <end position="332"/>
    </location>
</feature>
<feature type="region of interest" description="Disordered" evidence="2">
    <location>
        <begin position="378"/>
        <end position="411"/>
    </location>
</feature>
<feature type="region of interest" description="Disordered" evidence="2">
    <location>
        <begin position="466"/>
        <end position="518"/>
    </location>
</feature>
<feature type="region of interest" description="Disordered" evidence="2">
    <location>
        <begin position="541"/>
        <end position="582"/>
    </location>
</feature>
<feature type="region of interest" description="Disordered" evidence="2">
    <location>
        <begin position="595"/>
        <end position="800"/>
    </location>
</feature>
<feature type="region of interest" description="Disordered" evidence="2">
    <location>
        <begin position="813"/>
        <end position="848"/>
    </location>
</feature>
<feature type="compositionally biased region" description="Basic and acidic residues" evidence="2">
    <location>
        <begin position="1"/>
        <end position="13"/>
    </location>
</feature>
<feature type="compositionally biased region" description="Polar residues" evidence="2">
    <location>
        <begin position="168"/>
        <end position="203"/>
    </location>
</feature>
<feature type="compositionally biased region" description="Low complexity" evidence="2">
    <location>
        <begin position="204"/>
        <end position="218"/>
    </location>
</feature>
<feature type="compositionally biased region" description="Low complexity" evidence="2">
    <location>
        <begin position="239"/>
        <end position="250"/>
    </location>
</feature>
<feature type="compositionally biased region" description="Low complexity" evidence="2">
    <location>
        <begin position="378"/>
        <end position="393"/>
    </location>
</feature>
<feature type="compositionally biased region" description="Polar residues" evidence="2">
    <location>
        <begin position="477"/>
        <end position="500"/>
    </location>
</feature>
<feature type="compositionally biased region" description="Basic and acidic residues" evidence="2">
    <location>
        <begin position="501"/>
        <end position="518"/>
    </location>
</feature>
<feature type="compositionally biased region" description="Basic and acidic residues" evidence="2">
    <location>
        <begin position="541"/>
        <end position="569"/>
    </location>
</feature>
<feature type="compositionally biased region" description="Polar residues" evidence="2">
    <location>
        <begin position="571"/>
        <end position="582"/>
    </location>
</feature>
<feature type="compositionally biased region" description="Polar residues" evidence="2">
    <location>
        <begin position="648"/>
        <end position="670"/>
    </location>
</feature>
<feature type="compositionally biased region" description="Low complexity" evidence="2">
    <location>
        <begin position="679"/>
        <end position="691"/>
    </location>
</feature>
<feature type="compositionally biased region" description="Polar residues" evidence="2">
    <location>
        <begin position="692"/>
        <end position="713"/>
    </location>
</feature>
<feature type="compositionally biased region" description="Basic and acidic residues" evidence="2">
    <location>
        <begin position="736"/>
        <end position="764"/>
    </location>
</feature>
<feature type="compositionally biased region" description="Basic and acidic residues" evidence="2">
    <location>
        <begin position="779"/>
        <end position="794"/>
    </location>
</feature>
<feature type="compositionally biased region" description="Low complexity" evidence="2">
    <location>
        <begin position="833"/>
        <end position="848"/>
    </location>
</feature>
<dbReference type="EMBL" id="CP009805">
    <property type="protein sequence ID" value="ATZ46241.1"/>
    <property type="molecule type" value="Genomic_DNA"/>
</dbReference>
<dbReference type="SMR" id="A6RHW0"/>
<dbReference type="EnsemblFungi" id="Bcin01g08760.1">
    <property type="protein sequence ID" value="Bcin01p08760.1"/>
    <property type="gene ID" value="Bcin01g08760"/>
</dbReference>
<dbReference type="GeneID" id="5441583"/>
<dbReference type="KEGG" id="bfu:BCIN_01g08760"/>
<dbReference type="VEuPathDB" id="FungiDB:Bcin01g08760"/>
<dbReference type="OMA" id="CFLTYPP"/>
<dbReference type="OrthoDB" id="21471at2759"/>
<dbReference type="Proteomes" id="UP000001798">
    <property type="component" value="Chromosome bcin01"/>
</dbReference>
<dbReference type="GO" id="GO:0005737">
    <property type="term" value="C:cytoplasm"/>
    <property type="evidence" value="ECO:0007669"/>
    <property type="project" value="UniProtKB-SubCell"/>
</dbReference>
<dbReference type="CDD" id="cd24139">
    <property type="entry name" value="SIP5-like"/>
    <property type="match status" value="1"/>
</dbReference>
<dbReference type="InterPro" id="IPR039301">
    <property type="entry name" value="Sip5/DA2"/>
</dbReference>
<dbReference type="PANTHER" id="PTHR31315">
    <property type="entry name" value="PROTEIN SIP5"/>
    <property type="match status" value="1"/>
</dbReference>
<dbReference type="PANTHER" id="PTHR31315:SF1">
    <property type="entry name" value="PROTEIN SIP5"/>
    <property type="match status" value="1"/>
</dbReference>
<reference key="1">
    <citation type="journal article" date="2011" name="PLoS Genet.">
        <title>Genomic analysis of the necrotrophic fungal pathogens Sclerotinia sclerotiorum and Botrytis cinerea.</title>
        <authorList>
            <person name="Amselem J."/>
            <person name="Cuomo C.A."/>
            <person name="van Kan J.A.L."/>
            <person name="Viaud M."/>
            <person name="Benito E.P."/>
            <person name="Couloux A."/>
            <person name="Coutinho P.M."/>
            <person name="de Vries R.P."/>
            <person name="Dyer P.S."/>
            <person name="Fillinger S."/>
            <person name="Fournier E."/>
            <person name="Gout L."/>
            <person name="Hahn M."/>
            <person name="Kohn L."/>
            <person name="Lapalu N."/>
            <person name="Plummer K.M."/>
            <person name="Pradier J.-M."/>
            <person name="Quevillon E."/>
            <person name="Sharon A."/>
            <person name="Simon A."/>
            <person name="ten Have A."/>
            <person name="Tudzynski B."/>
            <person name="Tudzynski P."/>
            <person name="Wincker P."/>
            <person name="Andrew M."/>
            <person name="Anthouard V."/>
            <person name="Beever R.E."/>
            <person name="Beffa R."/>
            <person name="Benoit I."/>
            <person name="Bouzid O."/>
            <person name="Brault B."/>
            <person name="Chen Z."/>
            <person name="Choquer M."/>
            <person name="Collemare J."/>
            <person name="Cotton P."/>
            <person name="Danchin E.G."/>
            <person name="Da Silva C."/>
            <person name="Gautier A."/>
            <person name="Giraud C."/>
            <person name="Giraud T."/>
            <person name="Gonzalez C."/>
            <person name="Grossetete S."/>
            <person name="Gueldener U."/>
            <person name="Henrissat B."/>
            <person name="Howlett B.J."/>
            <person name="Kodira C."/>
            <person name="Kretschmer M."/>
            <person name="Lappartient A."/>
            <person name="Leroch M."/>
            <person name="Levis C."/>
            <person name="Mauceli E."/>
            <person name="Neuveglise C."/>
            <person name="Oeser B."/>
            <person name="Pearson M."/>
            <person name="Poulain J."/>
            <person name="Poussereau N."/>
            <person name="Quesneville H."/>
            <person name="Rascle C."/>
            <person name="Schumacher J."/>
            <person name="Segurens B."/>
            <person name="Sexton A."/>
            <person name="Silva E."/>
            <person name="Sirven C."/>
            <person name="Soanes D.M."/>
            <person name="Talbot N.J."/>
            <person name="Templeton M."/>
            <person name="Yandava C."/>
            <person name="Yarden O."/>
            <person name="Zeng Q."/>
            <person name="Rollins J.A."/>
            <person name="Lebrun M.-H."/>
            <person name="Dickman M."/>
        </authorList>
    </citation>
    <scope>NUCLEOTIDE SEQUENCE [LARGE SCALE GENOMIC DNA]</scope>
    <source>
        <strain>B05.10</strain>
    </source>
</reference>
<reference key="2">
    <citation type="journal article" date="2012" name="Eukaryot. Cell">
        <title>Genome update of Botrytis cinerea strains B05.10 and T4.</title>
        <authorList>
            <person name="Staats M."/>
            <person name="van Kan J.A.L."/>
        </authorList>
    </citation>
    <scope>NUCLEOTIDE SEQUENCE [LARGE SCALE GENOMIC DNA]</scope>
    <scope>GENOME REANNOTATION</scope>
    <source>
        <strain>B05.10</strain>
    </source>
</reference>
<reference key="3">
    <citation type="journal article" date="2017" name="Mol. Plant Pathol.">
        <title>A gapless genome sequence of the fungus Botrytis cinerea.</title>
        <authorList>
            <person name="van Kan J.A.L."/>
            <person name="Stassen J.H.M."/>
            <person name="Mosbach A."/>
            <person name="van der Lee T.A.J."/>
            <person name="Faino L."/>
            <person name="Farmer A.D."/>
            <person name="Papasotiriou D.G."/>
            <person name="Zhou S."/>
            <person name="Seidl M.F."/>
            <person name="Cottam E."/>
            <person name="Edel D."/>
            <person name="Hahn M."/>
            <person name="Schwartz D.C."/>
            <person name="Dietrich R.A."/>
            <person name="Widdison S."/>
            <person name="Scalliet G."/>
        </authorList>
    </citation>
    <scope>NUCLEOTIDE SEQUENCE [LARGE SCALE GENOMIC DNA]</scope>
    <scope>GENOME REANNOTATION</scope>
    <source>
        <strain>B05.10</strain>
    </source>
</reference>
<gene>
    <name type="primary">sip5</name>
    <name type="ORF">BC1G_00031</name>
    <name type="ORF">BCIN_01g08760</name>
</gene>
<sequence>MGQHQSRDDSHGGDRHRHHDAGTSGPTSPSDHDPYPSRTGRGSRRNLVASIVGGGSNNELPERKETAAERQMRRLERERVARVEERERSIREEHVDGGYLVTMGVYTGPEDFNKAIVRQLMIERRVAPFWRGLEDYESDWTEHQLVAAGRGLPIPAADEIPSEDSARPHSSNSTNAPSSNLQNLTVPIASRSQSASYDTSVGRSPSHSSFNTSSPTSPLNAPATSTSLLRPRAKTLGLKSSSKEPSASDSAPREIQLPRDSQVNGQAIEAFLYKDAVECSICLIFYPPYLNRTRCCDQSICSECFVQIKRPDPHTPEHHGPPQPAPDQAEDTEMLVSEPAACPYCQRPEFGVTYEPPPFRRGLVYAKPSRELANFSSAMSSSSSITSPPITSPGLAPRVDNRRRATSLSANDSNVITTDRIRPDWSAKLEAANLRKAKKNAAASALHAAAYVLPGTSENRSYVFGRSRFGRNRSDPDNSGSATPSNRDTSSRTAAESSGQARREGRDSHAARRTRDVEDMMMAEAIRLSIVAEEERKKKAEKEAAKEAAKNAKKQAKEDKKKEKKERKSIYGTNGHSASSSMLNLGNSLAATLTGRRRGDSVASNLATEVTPEEVEEPLQGKGKGVAHPYLGNDGSATDNGLLGTQHLDPSTSSSLLETHQSIPSPTSPDKPSHLRQMSTASSASSSVAESGNGTNPQGSSTSIESPGVTDTNEGNEDGDTGAESMFNFRSLTAMIEKENDNEKTDAVHVENAHEASGSRRGSPDETASQDMDVSMETLRPRDSPQQPKPDHHVPMGLQMPAPKIDTSIVTPQLTLTPDTPALMSPTEENGKQLGSNLQNLSNNEISQ</sequence>
<keyword id="KW-0963">Cytoplasm</keyword>
<keyword id="KW-1185">Reference proteome</keyword>
<accession>A6RHW0</accession>
<accession>A0A384J6Y3</accession>
<organism>
    <name type="scientific">Botryotinia fuckeliana (strain B05.10)</name>
    <name type="common">Noble rot fungus</name>
    <name type="synonym">Botrytis cinerea</name>
    <dbReference type="NCBI Taxonomy" id="332648"/>
    <lineage>
        <taxon>Eukaryota</taxon>
        <taxon>Fungi</taxon>
        <taxon>Dikarya</taxon>
        <taxon>Ascomycota</taxon>
        <taxon>Pezizomycotina</taxon>
        <taxon>Leotiomycetes</taxon>
        <taxon>Helotiales</taxon>
        <taxon>Sclerotiniaceae</taxon>
        <taxon>Botrytis</taxon>
    </lineage>
</organism>
<protein>
    <recommendedName>
        <fullName>Protein sip5</fullName>
    </recommendedName>
</protein>
<name>SIP5_BOTFB</name>
<comment type="function">
    <text evidence="1">May negatively regulate the snf1 kinase.</text>
</comment>
<comment type="subcellular location">
    <subcellularLocation>
        <location evidence="1">Cytoplasm</location>
    </subcellularLocation>
</comment>
<comment type="similarity">
    <text evidence="3">Belongs to the SIP5 family.</text>
</comment>